<geneLocation type="plasmid">
    <name>RPME01</name>
</geneLocation>
<name>RNH21_METPP</name>
<accession>A2SMZ3</accession>
<comment type="function">
    <text evidence="1">Endonuclease that specifically degrades the RNA of RNA-DNA hybrids.</text>
</comment>
<comment type="catalytic activity">
    <reaction evidence="1">
        <text>Endonucleolytic cleavage to 5'-phosphomonoester.</text>
        <dbReference type="EC" id="3.1.26.4"/>
    </reaction>
</comment>
<comment type="cofactor">
    <cofactor evidence="1">
        <name>Mn(2+)</name>
        <dbReference type="ChEBI" id="CHEBI:29035"/>
    </cofactor>
    <cofactor evidence="1">
        <name>Mg(2+)</name>
        <dbReference type="ChEBI" id="CHEBI:18420"/>
    </cofactor>
    <text evidence="1">Manganese or magnesium. Binds 1 divalent metal ion per monomer in the absence of substrate. May bind a second metal ion after substrate binding.</text>
</comment>
<comment type="subcellular location">
    <subcellularLocation>
        <location evidence="1">Cytoplasm</location>
    </subcellularLocation>
</comment>
<comment type="similarity">
    <text evidence="1">Belongs to the RNase HII family.</text>
</comment>
<keyword id="KW-0963">Cytoplasm</keyword>
<keyword id="KW-0255">Endonuclease</keyword>
<keyword id="KW-0378">Hydrolase</keyword>
<keyword id="KW-0464">Manganese</keyword>
<keyword id="KW-0479">Metal-binding</keyword>
<keyword id="KW-0540">Nuclease</keyword>
<keyword id="KW-0614">Plasmid</keyword>
<keyword id="KW-1185">Reference proteome</keyword>
<dbReference type="EC" id="3.1.26.4" evidence="1"/>
<dbReference type="EMBL" id="CP000556">
    <property type="protein sequence ID" value="ABM96932.1"/>
    <property type="molecule type" value="Genomic_DNA"/>
</dbReference>
<dbReference type="RefSeq" id="WP_011831547.1">
    <property type="nucleotide sequence ID" value="NC_008826.1"/>
</dbReference>
<dbReference type="SMR" id="A2SMZ3"/>
<dbReference type="KEGG" id="mpt:Mpe_B0154"/>
<dbReference type="eggNOG" id="COG0164">
    <property type="taxonomic scope" value="Bacteria"/>
</dbReference>
<dbReference type="HOGENOM" id="CLU_036532_3_2_4"/>
<dbReference type="Proteomes" id="UP000000366">
    <property type="component" value="Plasmid RPME01"/>
</dbReference>
<dbReference type="GO" id="GO:0005737">
    <property type="term" value="C:cytoplasm"/>
    <property type="evidence" value="ECO:0007669"/>
    <property type="project" value="UniProtKB-SubCell"/>
</dbReference>
<dbReference type="GO" id="GO:0032299">
    <property type="term" value="C:ribonuclease H2 complex"/>
    <property type="evidence" value="ECO:0007669"/>
    <property type="project" value="TreeGrafter"/>
</dbReference>
<dbReference type="GO" id="GO:0030145">
    <property type="term" value="F:manganese ion binding"/>
    <property type="evidence" value="ECO:0007669"/>
    <property type="project" value="UniProtKB-UniRule"/>
</dbReference>
<dbReference type="GO" id="GO:0003723">
    <property type="term" value="F:RNA binding"/>
    <property type="evidence" value="ECO:0007669"/>
    <property type="project" value="InterPro"/>
</dbReference>
<dbReference type="GO" id="GO:0004523">
    <property type="term" value="F:RNA-DNA hybrid ribonuclease activity"/>
    <property type="evidence" value="ECO:0007669"/>
    <property type="project" value="UniProtKB-UniRule"/>
</dbReference>
<dbReference type="GO" id="GO:0043137">
    <property type="term" value="P:DNA replication, removal of RNA primer"/>
    <property type="evidence" value="ECO:0007669"/>
    <property type="project" value="TreeGrafter"/>
</dbReference>
<dbReference type="GO" id="GO:0006298">
    <property type="term" value="P:mismatch repair"/>
    <property type="evidence" value="ECO:0007669"/>
    <property type="project" value="TreeGrafter"/>
</dbReference>
<dbReference type="CDD" id="cd07182">
    <property type="entry name" value="RNase_HII_bacteria_HII_like"/>
    <property type="match status" value="1"/>
</dbReference>
<dbReference type="FunFam" id="3.30.420.10:FF:000006">
    <property type="entry name" value="Ribonuclease HII"/>
    <property type="match status" value="1"/>
</dbReference>
<dbReference type="Gene3D" id="3.30.420.10">
    <property type="entry name" value="Ribonuclease H-like superfamily/Ribonuclease H"/>
    <property type="match status" value="1"/>
</dbReference>
<dbReference type="HAMAP" id="MF_00052_B">
    <property type="entry name" value="RNase_HII_B"/>
    <property type="match status" value="1"/>
</dbReference>
<dbReference type="InterPro" id="IPR022898">
    <property type="entry name" value="RNase_HII"/>
</dbReference>
<dbReference type="InterPro" id="IPR001352">
    <property type="entry name" value="RNase_HII/HIII"/>
</dbReference>
<dbReference type="InterPro" id="IPR024567">
    <property type="entry name" value="RNase_HII/HIII_dom"/>
</dbReference>
<dbReference type="InterPro" id="IPR012337">
    <property type="entry name" value="RNaseH-like_sf"/>
</dbReference>
<dbReference type="InterPro" id="IPR036397">
    <property type="entry name" value="RNaseH_sf"/>
</dbReference>
<dbReference type="NCBIfam" id="NF000594">
    <property type="entry name" value="PRK00015.1-1"/>
    <property type="match status" value="1"/>
</dbReference>
<dbReference type="NCBIfam" id="NF000595">
    <property type="entry name" value="PRK00015.1-3"/>
    <property type="match status" value="1"/>
</dbReference>
<dbReference type="NCBIfam" id="NF000596">
    <property type="entry name" value="PRK00015.1-4"/>
    <property type="match status" value="1"/>
</dbReference>
<dbReference type="PANTHER" id="PTHR10954">
    <property type="entry name" value="RIBONUCLEASE H2 SUBUNIT A"/>
    <property type="match status" value="1"/>
</dbReference>
<dbReference type="PANTHER" id="PTHR10954:SF18">
    <property type="entry name" value="RIBONUCLEASE HII"/>
    <property type="match status" value="1"/>
</dbReference>
<dbReference type="Pfam" id="PF01351">
    <property type="entry name" value="RNase_HII"/>
    <property type="match status" value="1"/>
</dbReference>
<dbReference type="SUPFAM" id="SSF53098">
    <property type="entry name" value="Ribonuclease H-like"/>
    <property type="match status" value="1"/>
</dbReference>
<dbReference type="PROSITE" id="PS51975">
    <property type="entry name" value="RNASE_H_2"/>
    <property type="match status" value="1"/>
</dbReference>
<proteinExistence type="inferred from homology"/>
<evidence type="ECO:0000255" key="1">
    <source>
        <dbReference type="HAMAP-Rule" id="MF_00052"/>
    </source>
</evidence>
<evidence type="ECO:0000255" key="2">
    <source>
        <dbReference type="PROSITE-ProRule" id="PRU01319"/>
    </source>
</evidence>
<protein>
    <recommendedName>
        <fullName evidence="1">Ribonuclease HII 1</fullName>
        <shortName evidence="1">RNase HII 1</shortName>
        <ecNumber evidence="1">3.1.26.4</ecNumber>
    </recommendedName>
</protein>
<reference key="1">
    <citation type="journal article" date="2007" name="J. Bacteriol.">
        <title>Whole-genome analysis of the methyl tert-butyl ether-degrading beta-proteobacterium Methylibium petroleiphilum PM1.</title>
        <authorList>
            <person name="Kane S.R."/>
            <person name="Chakicherla A.Y."/>
            <person name="Chain P.S.G."/>
            <person name="Schmidt R."/>
            <person name="Shin M.W."/>
            <person name="Legler T.C."/>
            <person name="Scow K.M."/>
            <person name="Larimer F.W."/>
            <person name="Lucas S.M."/>
            <person name="Richardson P.M."/>
            <person name="Hristova K.R."/>
        </authorList>
    </citation>
    <scope>NUCLEOTIDE SEQUENCE [LARGE SCALE GENOMIC DNA]</scope>
    <source>
        <strain>ATCC BAA-1232 / LMG 22953 / PM1</strain>
    </source>
</reference>
<feature type="chain" id="PRO_0000334920" description="Ribonuclease HII 1">
    <location>
        <begin position="1"/>
        <end position="198"/>
    </location>
</feature>
<feature type="domain" description="RNase H type-2" evidence="2">
    <location>
        <begin position="7"/>
        <end position="196"/>
    </location>
</feature>
<feature type="binding site" evidence="1">
    <location>
        <position position="13"/>
    </location>
    <ligand>
        <name>a divalent metal cation</name>
        <dbReference type="ChEBI" id="CHEBI:60240"/>
    </ligand>
</feature>
<feature type="binding site" evidence="1">
    <location>
        <position position="14"/>
    </location>
    <ligand>
        <name>a divalent metal cation</name>
        <dbReference type="ChEBI" id="CHEBI:60240"/>
    </ligand>
</feature>
<feature type="binding site" evidence="1">
    <location>
        <position position="105"/>
    </location>
    <ligand>
        <name>a divalent metal cation</name>
        <dbReference type="ChEBI" id="CHEBI:60240"/>
    </ligand>
</feature>
<sequence>MQSLHLELTAGVDEAGRGPLAGPVVAAAVILDPSRPIDGLNDSKQLSAKRRDRLFDLIIERAAAYCIAEASVEEIDRLNILQATMLAMQRAIAGLSVTPQLVLIDGNRSPLLPMRSEAIVKGDARVTSIGAASILAKVHRDRLCAKLHETFPLYGFAVHKGYGTADHLAALVQHGACPEHRRTFSPVRAALARAAAHA</sequence>
<gene>
    <name evidence="1" type="primary">rnhB1</name>
    <name type="ordered locus">Mpe_B0154</name>
</gene>
<organism>
    <name type="scientific">Methylibium petroleiphilum (strain ATCC BAA-1232 / LMG 22953 / PM1)</name>
    <dbReference type="NCBI Taxonomy" id="420662"/>
    <lineage>
        <taxon>Bacteria</taxon>
        <taxon>Pseudomonadati</taxon>
        <taxon>Pseudomonadota</taxon>
        <taxon>Betaproteobacteria</taxon>
        <taxon>Burkholderiales</taxon>
        <taxon>Sphaerotilaceae</taxon>
        <taxon>Methylibium</taxon>
    </lineage>
</organism>